<sequence>MSSPSSPFREQSFLCAAGDAGEESRVQVLKNEVRRGSPVLLGWVEQAYADKCVCGPSAPPAPTPPSLSQRVMCNDLFKVNPFQLQQFRADPSTASLLLCPGGLDHKLNLRGKAWG</sequence>
<dbReference type="EMBL" id="AF105277">
    <property type="protein sequence ID" value="AAD04172.1"/>
    <property type="molecule type" value="mRNA"/>
</dbReference>
<dbReference type="EMBL" id="AC024619">
    <property type="status" value="NOT_ANNOTATED_CDS"/>
    <property type="molecule type" value="Genomic_DNA"/>
</dbReference>
<dbReference type="EMBL" id="CH471159">
    <property type="protein sequence ID" value="EAW51180.1"/>
    <property type="molecule type" value="Genomic_DNA"/>
</dbReference>
<dbReference type="EMBL" id="BC047669">
    <property type="protein sequence ID" value="AAH47669.1"/>
    <property type="molecule type" value="mRNA"/>
</dbReference>
<dbReference type="EMBL" id="BC058075">
    <property type="protein sequence ID" value="AAH58075.1"/>
    <property type="molecule type" value="mRNA"/>
</dbReference>
<dbReference type="EMBL" id="BC131561">
    <property type="protein sequence ID" value="AAI31562.1"/>
    <property type="molecule type" value="mRNA"/>
</dbReference>
<dbReference type="RefSeq" id="NP_004731.2">
    <property type="nucleotide sequence ID" value="NM_004740.3"/>
</dbReference>
<dbReference type="BioGRID" id="114653">
    <property type="interactions" value="8"/>
</dbReference>
<dbReference type="IntAct" id="O95411">
    <property type="interactions" value="6"/>
</dbReference>
<dbReference type="STRING" id="9606.ENSP00000352424"/>
<dbReference type="BioMuta" id="TIAF1"/>
<dbReference type="PaxDb" id="9606-ENSP00000352424"/>
<dbReference type="Antibodypedia" id="26652">
    <property type="antibodies" value="102 antibodies from 27 providers"/>
</dbReference>
<dbReference type="DNASU" id="9220"/>
<dbReference type="UCSC" id="uc002hdv.2">
    <molecule id="O95411-1"/>
    <property type="organism name" value="human"/>
</dbReference>
<dbReference type="AGR" id="HGNC:31104"/>
<dbReference type="DisGeNET" id="399687"/>
<dbReference type="GeneCards" id="MYO18A"/>
<dbReference type="HGNC" id="HGNC:31104">
    <property type="gene designation" value="MYO18A"/>
</dbReference>
<dbReference type="MalaCards" id="MYO18A"/>
<dbReference type="MIM" id="609517">
    <property type="type" value="gene"/>
</dbReference>
<dbReference type="neXtProt" id="NX_O95411"/>
<dbReference type="PharmGKB" id="PA36512"/>
<dbReference type="VEuPathDB" id="HostDB:ENSG00000221995"/>
<dbReference type="eggNOG" id="ENOG502TD57">
    <property type="taxonomic scope" value="Eukaryota"/>
</dbReference>
<dbReference type="HOGENOM" id="CLU_2108251_0_0_1"/>
<dbReference type="InParanoid" id="O95411"/>
<dbReference type="OMA" id="CNDLFKI"/>
<dbReference type="OrthoDB" id="9749169at2759"/>
<dbReference type="PAN-GO" id="O95411">
    <property type="GO annotations" value="0 GO annotations based on evolutionary models"/>
</dbReference>
<dbReference type="PathwayCommons" id="O95411"/>
<dbReference type="SignaLink" id="O95411"/>
<dbReference type="BioGRID-ORCS" id="9220">
    <property type="hits" value="20 hits in 1092 CRISPR screens"/>
</dbReference>
<dbReference type="GeneWiki" id="TIAF1"/>
<dbReference type="GenomeRNAi" id="9220"/>
<dbReference type="Pharos" id="O95411">
    <property type="development level" value="Tbio"/>
</dbReference>
<dbReference type="PRO" id="PR:O95411"/>
<dbReference type="Proteomes" id="UP000005640">
    <property type="component" value="Chromosome 17"/>
</dbReference>
<dbReference type="RNAct" id="O95411">
    <property type="molecule type" value="protein"/>
</dbReference>
<dbReference type="Bgee" id="ENSG00000221995">
    <property type="expression patterns" value="Expressed in apex of heart and 97 other cell types or tissues"/>
</dbReference>
<dbReference type="GO" id="GO:0005634">
    <property type="term" value="C:nucleus"/>
    <property type="evidence" value="ECO:0000303"/>
    <property type="project" value="UniProtKB"/>
</dbReference>
<dbReference type="GO" id="GO:0006915">
    <property type="term" value="P:apoptotic process"/>
    <property type="evidence" value="ECO:0007669"/>
    <property type="project" value="UniProtKB-KW"/>
</dbReference>
<dbReference type="GO" id="GO:0007249">
    <property type="term" value="P:canonical NF-kappaB signal transduction"/>
    <property type="evidence" value="ECO:0000314"/>
    <property type="project" value="UniProtKB"/>
</dbReference>
<dbReference type="GO" id="GO:0043066">
    <property type="term" value="P:negative regulation of apoptotic process"/>
    <property type="evidence" value="ECO:0000314"/>
    <property type="project" value="UniProtKB"/>
</dbReference>
<comment type="function">
    <molecule>Isoform TIAF1</molecule>
    <text evidence="2">Inhibits the cytotoxic effects of TNF-alpha and overexpressed TNF receptor adapters TRADD, FADD, and RIPK1. Involved in TGF-beta1 inhibition of IkappaB-alpha expression and suppression of TNF-mediated IkappaB-alpha degradation.</text>
</comment>
<comment type="interaction">
    <interactant intactId="EBI-302378">
        <id>O95411</id>
    </interactant>
    <interactant intactId="EBI-821758">
        <id>PRO_0000000092</id>
        <label>APP</label>
        <dbReference type="UniProtKB" id="P05067"/>
    </interactant>
    <organismsDiffer>false</organismsDiffer>
    <experiments>3</experiments>
</comment>
<comment type="interaction">
    <interactant intactId="EBI-302378">
        <id>O95411</id>
    </interactant>
    <interactant intactId="EBI-930964">
        <id>P54253</id>
        <label>ATXN1</label>
    </interactant>
    <organismsDiffer>false</organismsDiffer>
    <experiments>3</experiments>
</comment>
<comment type="interaction">
    <interactant intactId="EBI-302378">
        <id>O95411</id>
    </interactant>
    <interactant intactId="EBI-12094670">
        <id>Q8WUI4-6</id>
        <label>HDAC7</label>
    </interactant>
    <organismsDiffer>false</organismsDiffer>
    <experiments>3</experiments>
</comment>
<comment type="subcellular location">
    <molecule>Isoform TIAF1</molecule>
    <subcellularLocation>
        <location evidence="2">Nucleus</location>
    </subcellularLocation>
</comment>
<comment type="alternative products">
    <event type="alternative splicing"/>
    <isoform>
        <id>O95411-1</id>
        <name evidence="3">TIAF1</name>
        <sequence type="displayed"/>
    </isoform>
    <isoform>
        <id>Q92614-1</id>
        <name>1</name>
        <name>Alpha</name>
        <name>SP-R210L</name>
        <sequence type="external"/>
    </isoform>
    <isoform>
        <id>Q92614-2</id>
        <name>2</name>
        <name>Beta</name>
        <sequence type="external"/>
    </isoform>
    <isoform>
        <id>Q92614-3</id>
        <name>3</name>
        <sequence type="external"/>
    </isoform>
    <isoform>
        <id>Q92614-4</id>
        <name>4</name>
        <sequence type="external"/>
    </isoform>
    <isoform>
        <id>Q92614-5</id>
        <name>5</name>
        <name>SP-R210S</name>
        <sequence type="external"/>
    </isoform>
</comment>
<comment type="tissue specificity">
    <text evidence="1">Not detectable in normal kidney and liver. Up-regulated in chronic and acute allograft rejection: expressed in the inflammatory infiltrate and in tubular epithelial cells.</text>
</comment>
<comment type="caution">
    <text evidence="4">Product of a dubious CDS prediction. The TIAF1 protein is coded in the 3'-UTR region of MYO18A. Does not seem to exist in orthologs.</text>
</comment>
<protein>
    <recommendedName>
        <fullName evidence="4">Putative TGFB1-induced anti-apoptotic factor 1</fullName>
    </recommendedName>
    <alternativeName>
        <fullName>12 kDa TGF-beta-1-induced antiapoptotic factor</fullName>
    </alternativeName>
</protein>
<name>TIAF1_HUMAN</name>
<reference key="1">
    <citation type="journal article" date="1998" name="Biochem. Biophys. Res. Commun.">
        <title>Cloning and characterization of a novel transforming growth factor-beta1-induced TIAF1 protein that inhibits tumor necrosis factor cytotoxicity.</title>
        <authorList>
            <person name="Chang N.-S."/>
            <person name="Mattison J."/>
            <person name="Cao H."/>
            <person name="Pratt N."/>
            <person name="Zhao Y."/>
            <person name="Lee C."/>
        </authorList>
    </citation>
    <scope>NUCLEOTIDE SEQUENCE [MRNA]</scope>
    <scope>FUNCTION</scope>
    <scope>SUBCELLULAR LOCATION</scope>
    <source>
        <tissue>Mammary gland</tissue>
    </source>
</reference>
<reference key="2">
    <citation type="journal article" date="2006" name="Nature">
        <title>DNA sequence of human chromosome 17 and analysis of rearrangement in the human lineage.</title>
        <authorList>
            <person name="Zody M.C."/>
            <person name="Garber M."/>
            <person name="Adams D.J."/>
            <person name="Sharpe T."/>
            <person name="Harrow J."/>
            <person name="Lupski J.R."/>
            <person name="Nicholson C."/>
            <person name="Searle S.M."/>
            <person name="Wilming L."/>
            <person name="Young S.K."/>
            <person name="Abouelleil A."/>
            <person name="Allen N.R."/>
            <person name="Bi W."/>
            <person name="Bloom T."/>
            <person name="Borowsky M.L."/>
            <person name="Bugalter B.E."/>
            <person name="Butler J."/>
            <person name="Chang J.L."/>
            <person name="Chen C.-K."/>
            <person name="Cook A."/>
            <person name="Corum B."/>
            <person name="Cuomo C.A."/>
            <person name="de Jong P.J."/>
            <person name="DeCaprio D."/>
            <person name="Dewar K."/>
            <person name="FitzGerald M."/>
            <person name="Gilbert J."/>
            <person name="Gibson R."/>
            <person name="Gnerre S."/>
            <person name="Goldstein S."/>
            <person name="Grafham D.V."/>
            <person name="Grocock R."/>
            <person name="Hafez N."/>
            <person name="Hagopian D.S."/>
            <person name="Hart E."/>
            <person name="Norman C.H."/>
            <person name="Humphray S."/>
            <person name="Jaffe D.B."/>
            <person name="Jones M."/>
            <person name="Kamal M."/>
            <person name="Khodiyar V.K."/>
            <person name="LaButti K."/>
            <person name="Laird G."/>
            <person name="Lehoczky J."/>
            <person name="Liu X."/>
            <person name="Lokyitsang T."/>
            <person name="Loveland J."/>
            <person name="Lui A."/>
            <person name="Macdonald P."/>
            <person name="Major J.E."/>
            <person name="Matthews L."/>
            <person name="Mauceli E."/>
            <person name="McCarroll S.A."/>
            <person name="Mihalev A.H."/>
            <person name="Mudge J."/>
            <person name="Nguyen C."/>
            <person name="Nicol R."/>
            <person name="O'Leary S.B."/>
            <person name="Osoegawa K."/>
            <person name="Schwartz D.C."/>
            <person name="Shaw-Smith C."/>
            <person name="Stankiewicz P."/>
            <person name="Steward C."/>
            <person name="Swarbreck D."/>
            <person name="Venkataraman V."/>
            <person name="Whittaker C.A."/>
            <person name="Yang X."/>
            <person name="Zimmer A.R."/>
            <person name="Bradley A."/>
            <person name="Hubbard T."/>
            <person name="Birren B.W."/>
            <person name="Rogers J."/>
            <person name="Lander E.S."/>
            <person name="Nusbaum C."/>
        </authorList>
    </citation>
    <scope>NUCLEOTIDE SEQUENCE [LARGE SCALE GENOMIC DNA]</scope>
</reference>
<reference key="3">
    <citation type="submission" date="2005-07" db="EMBL/GenBank/DDBJ databases">
        <authorList>
            <person name="Mural R.J."/>
            <person name="Istrail S."/>
            <person name="Sutton G.G."/>
            <person name="Florea L."/>
            <person name="Halpern A.L."/>
            <person name="Mobarry C.M."/>
            <person name="Lippert R."/>
            <person name="Walenz B."/>
            <person name="Shatkay H."/>
            <person name="Dew I."/>
            <person name="Miller J.R."/>
            <person name="Flanigan M.J."/>
            <person name="Edwards N.J."/>
            <person name="Bolanos R."/>
            <person name="Fasulo D."/>
            <person name="Halldorsson B.V."/>
            <person name="Hannenhalli S."/>
            <person name="Turner R."/>
            <person name="Yooseph S."/>
            <person name="Lu F."/>
            <person name="Nusskern D.R."/>
            <person name="Shue B.C."/>
            <person name="Zheng X.H."/>
            <person name="Zhong F."/>
            <person name="Delcher A.L."/>
            <person name="Huson D.H."/>
            <person name="Kravitz S.A."/>
            <person name="Mouchard L."/>
            <person name="Reinert K."/>
            <person name="Remington K.A."/>
            <person name="Clark A.G."/>
            <person name="Waterman M.S."/>
            <person name="Eichler E.E."/>
            <person name="Adams M.D."/>
            <person name="Hunkapiller M.W."/>
            <person name="Myers E.W."/>
            <person name="Venter J.C."/>
        </authorList>
    </citation>
    <scope>NUCLEOTIDE SEQUENCE [LARGE SCALE GENOMIC DNA]</scope>
</reference>
<reference key="4">
    <citation type="journal article" date="2004" name="Genome Res.">
        <title>The status, quality, and expansion of the NIH full-length cDNA project: the Mammalian Gene Collection (MGC).</title>
        <authorList>
            <consortium name="The MGC Project Team"/>
        </authorList>
    </citation>
    <scope>NUCLEOTIDE SEQUENCE [LARGE SCALE MRNA]</scope>
    <source>
        <tissue>Skin</tissue>
        <tissue>Uterus</tissue>
    </source>
</reference>
<reference key="5">
    <citation type="journal article" date="2003" name="Transplantation">
        <title>High expression of TIAF-1 in chronic kidney and liver allograft rejection and in activated T-helper cells.</title>
        <authorList>
            <person name="van der Leij J."/>
            <person name="van den Berg A."/>
            <person name="Albrecht E.W."/>
            <person name="Blokzijl T."/>
            <person name="Roozendaal R."/>
            <person name="Gouw A.S."/>
            <person name="de Jong K.P."/>
            <person name="Stegeman C.A."/>
            <person name="van Goor H."/>
            <person name="Chang N.S."/>
            <person name="Poppema S."/>
        </authorList>
    </citation>
    <scope>TISSUE SPECIFICITY</scope>
</reference>
<evidence type="ECO:0000269" key="1">
    <source>
    </source>
</evidence>
<evidence type="ECO:0000269" key="2">
    <source>
    </source>
</evidence>
<evidence type="ECO:0000303" key="3">
    <source>
    </source>
</evidence>
<evidence type="ECO:0000305" key="4"/>
<keyword id="KW-0025">Alternative splicing</keyword>
<keyword id="KW-0053">Apoptosis</keyword>
<keyword id="KW-0539">Nucleus</keyword>
<keyword id="KW-1185">Reference proteome</keyword>
<proteinExistence type="uncertain"/>
<organism>
    <name type="scientific">Homo sapiens</name>
    <name type="common">Human</name>
    <dbReference type="NCBI Taxonomy" id="9606"/>
    <lineage>
        <taxon>Eukaryota</taxon>
        <taxon>Metazoa</taxon>
        <taxon>Chordata</taxon>
        <taxon>Craniata</taxon>
        <taxon>Vertebrata</taxon>
        <taxon>Euteleostomi</taxon>
        <taxon>Mammalia</taxon>
        <taxon>Eutheria</taxon>
        <taxon>Euarchontoglires</taxon>
        <taxon>Primates</taxon>
        <taxon>Haplorrhini</taxon>
        <taxon>Catarrhini</taxon>
        <taxon>Hominidae</taxon>
        <taxon>Homo</taxon>
    </lineage>
</organism>
<feature type="chain" id="PRO_0000072534" description="Putative TGFB1-induced anti-apoptotic factor 1">
    <location>
        <begin position="1"/>
        <end position="115"/>
    </location>
</feature>
<feature type="sequence conflict" description="In Ref. 1; AAD04172." evidence="4" ref="1">
    <original>A</original>
    <variation>V</variation>
    <location>
        <position position="49"/>
    </location>
</feature>
<accession>O95411</accession>
<accession>A2RRE2</accession>
<accession>Q6PEG2</accession>
<gene>
    <name type="primary">MYO18A</name>
    <name type="synonym">TIAF1</name>
</gene>